<organism>
    <name type="scientific">Listeria monocytogenes serotype 4a (strain HCC23)</name>
    <dbReference type="NCBI Taxonomy" id="552536"/>
    <lineage>
        <taxon>Bacteria</taxon>
        <taxon>Bacillati</taxon>
        <taxon>Bacillota</taxon>
        <taxon>Bacilli</taxon>
        <taxon>Bacillales</taxon>
        <taxon>Listeriaceae</taxon>
        <taxon>Listeria</taxon>
    </lineage>
</organism>
<dbReference type="EC" id="3.5.2.3" evidence="1"/>
<dbReference type="EMBL" id="CP001175">
    <property type="protein sequence ID" value="ACK39074.1"/>
    <property type="molecule type" value="Genomic_DNA"/>
</dbReference>
<dbReference type="RefSeq" id="WP_012581111.1">
    <property type="nucleotide sequence ID" value="NC_011660.1"/>
</dbReference>
<dbReference type="SMR" id="B8DDR5"/>
<dbReference type="KEGG" id="lmh:LMHCC_0719"/>
<dbReference type="HOGENOM" id="CLU_015572_1_0_9"/>
<dbReference type="UniPathway" id="UPA00070">
    <property type="reaction ID" value="UER00117"/>
</dbReference>
<dbReference type="GO" id="GO:0005737">
    <property type="term" value="C:cytoplasm"/>
    <property type="evidence" value="ECO:0007669"/>
    <property type="project" value="TreeGrafter"/>
</dbReference>
<dbReference type="GO" id="GO:0004038">
    <property type="term" value="F:allantoinase activity"/>
    <property type="evidence" value="ECO:0007669"/>
    <property type="project" value="TreeGrafter"/>
</dbReference>
<dbReference type="GO" id="GO:0004151">
    <property type="term" value="F:dihydroorotase activity"/>
    <property type="evidence" value="ECO:0007669"/>
    <property type="project" value="UniProtKB-UniRule"/>
</dbReference>
<dbReference type="GO" id="GO:0008270">
    <property type="term" value="F:zinc ion binding"/>
    <property type="evidence" value="ECO:0007669"/>
    <property type="project" value="UniProtKB-UniRule"/>
</dbReference>
<dbReference type="GO" id="GO:0044205">
    <property type="term" value="P:'de novo' UMP biosynthetic process"/>
    <property type="evidence" value="ECO:0007669"/>
    <property type="project" value="UniProtKB-UniRule"/>
</dbReference>
<dbReference type="GO" id="GO:0006145">
    <property type="term" value="P:purine nucleobase catabolic process"/>
    <property type="evidence" value="ECO:0007669"/>
    <property type="project" value="TreeGrafter"/>
</dbReference>
<dbReference type="CDD" id="cd01317">
    <property type="entry name" value="DHOase_IIa"/>
    <property type="match status" value="1"/>
</dbReference>
<dbReference type="Gene3D" id="3.20.20.140">
    <property type="entry name" value="Metal-dependent hydrolases"/>
    <property type="match status" value="1"/>
</dbReference>
<dbReference type="Gene3D" id="2.30.40.10">
    <property type="entry name" value="Urease, subunit C, domain 1"/>
    <property type="match status" value="1"/>
</dbReference>
<dbReference type="HAMAP" id="MF_00220_B">
    <property type="entry name" value="PyrC_classI_B"/>
    <property type="match status" value="1"/>
</dbReference>
<dbReference type="InterPro" id="IPR006680">
    <property type="entry name" value="Amidohydro-rel"/>
</dbReference>
<dbReference type="InterPro" id="IPR004722">
    <property type="entry name" value="DHOase"/>
</dbReference>
<dbReference type="InterPro" id="IPR050138">
    <property type="entry name" value="DHOase/Allantoinase_Hydrolase"/>
</dbReference>
<dbReference type="InterPro" id="IPR002195">
    <property type="entry name" value="Dihydroorotase_CS"/>
</dbReference>
<dbReference type="InterPro" id="IPR011059">
    <property type="entry name" value="Metal-dep_hydrolase_composite"/>
</dbReference>
<dbReference type="InterPro" id="IPR032466">
    <property type="entry name" value="Metal_Hydrolase"/>
</dbReference>
<dbReference type="NCBIfam" id="NF006837">
    <property type="entry name" value="PRK09357.1-2"/>
    <property type="match status" value="1"/>
</dbReference>
<dbReference type="NCBIfam" id="TIGR00857">
    <property type="entry name" value="pyrC_multi"/>
    <property type="match status" value="1"/>
</dbReference>
<dbReference type="PANTHER" id="PTHR43668">
    <property type="entry name" value="ALLANTOINASE"/>
    <property type="match status" value="1"/>
</dbReference>
<dbReference type="PANTHER" id="PTHR43668:SF2">
    <property type="entry name" value="ALLANTOINASE"/>
    <property type="match status" value="1"/>
</dbReference>
<dbReference type="Pfam" id="PF01979">
    <property type="entry name" value="Amidohydro_1"/>
    <property type="match status" value="1"/>
</dbReference>
<dbReference type="SUPFAM" id="SSF51338">
    <property type="entry name" value="Composite domain of metallo-dependent hydrolases"/>
    <property type="match status" value="1"/>
</dbReference>
<dbReference type="SUPFAM" id="SSF51556">
    <property type="entry name" value="Metallo-dependent hydrolases"/>
    <property type="match status" value="1"/>
</dbReference>
<dbReference type="PROSITE" id="PS00482">
    <property type="entry name" value="DIHYDROOROTASE_1"/>
    <property type="match status" value="1"/>
</dbReference>
<dbReference type="PROSITE" id="PS00483">
    <property type="entry name" value="DIHYDROOROTASE_2"/>
    <property type="match status" value="1"/>
</dbReference>
<accession>B8DDR5</accession>
<feature type="chain" id="PRO_1000193099" description="Dihydroorotase">
    <location>
        <begin position="1"/>
        <end position="426"/>
    </location>
</feature>
<feature type="active site" evidence="1">
    <location>
        <position position="303"/>
    </location>
</feature>
<feature type="binding site" evidence="1">
    <location>
        <position position="58"/>
    </location>
    <ligand>
        <name>Zn(2+)</name>
        <dbReference type="ChEBI" id="CHEBI:29105"/>
        <label>1</label>
    </ligand>
</feature>
<feature type="binding site" evidence="1">
    <location>
        <begin position="60"/>
        <end position="62"/>
    </location>
    <ligand>
        <name>substrate</name>
    </ligand>
</feature>
<feature type="binding site" evidence="1">
    <location>
        <position position="60"/>
    </location>
    <ligand>
        <name>Zn(2+)</name>
        <dbReference type="ChEBI" id="CHEBI:29105"/>
        <label>1</label>
    </ligand>
</feature>
<feature type="binding site" evidence="1">
    <location>
        <position position="92"/>
    </location>
    <ligand>
        <name>substrate</name>
    </ligand>
</feature>
<feature type="binding site" evidence="1">
    <location>
        <position position="150"/>
    </location>
    <ligand>
        <name>Zn(2+)</name>
        <dbReference type="ChEBI" id="CHEBI:29105"/>
        <label>1</label>
    </ligand>
</feature>
<feature type="binding site" evidence="1">
    <location>
        <position position="150"/>
    </location>
    <ligand>
        <name>Zn(2+)</name>
        <dbReference type="ChEBI" id="CHEBI:29105"/>
        <label>2</label>
    </ligand>
</feature>
<feature type="binding site" evidence="1">
    <location>
        <position position="177"/>
    </location>
    <ligand>
        <name>Zn(2+)</name>
        <dbReference type="ChEBI" id="CHEBI:29105"/>
        <label>2</label>
    </ligand>
</feature>
<feature type="binding site" evidence="1">
    <location>
        <position position="230"/>
    </location>
    <ligand>
        <name>Zn(2+)</name>
        <dbReference type="ChEBI" id="CHEBI:29105"/>
        <label>2</label>
    </ligand>
</feature>
<feature type="binding site" evidence="1">
    <location>
        <position position="276"/>
    </location>
    <ligand>
        <name>substrate</name>
    </ligand>
</feature>
<feature type="binding site" evidence="1">
    <location>
        <position position="303"/>
    </location>
    <ligand>
        <name>Zn(2+)</name>
        <dbReference type="ChEBI" id="CHEBI:29105"/>
        <label>1</label>
    </ligand>
</feature>
<feature type="binding site" evidence="1">
    <location>
        <position position="307"/>
    </location>
    <ligand>
        <name>substrate</name>
    </ligand>
</feature>
<feature type="binding site" evidence="1">
    <location>
        <begin position="321"/>
        <end position="322"/>
    </location>
    <ligand>
        <name>substrate</name>
    </ligand>
</feature>
<evidence type="ECO:0000255" key="1">
    <source>
        <dbReference type="HAMAP-Rule" id="MF_00220"/>
    </source>
</evidence>
<keyword id="KW-0378">Hydrolase</keyword>
<keyword id="KW-0479">Metal-binding</keyword>
<keyword id="KW-0665">Pyrimidine biosynthesis</keyword>
<keyword id="KW-0862">Zinc</keyword>
<name>PYRC_LISMH</name>
<gene>
    <name evidence="1" type="primary">pyrC</name>
    <name type="ordered locus">LMHCC_0719</name>
</gene>
<protein>
    <recommendedName>
        <fullName evidence="1">Dihydroorotase</fullName>
        <shortName evidence="1">DHOase</shortName>
        <ecNumber evidence="1">3.5.2.3</ecNumber>
    </recommendedName>
</protein>
<proteinExistence type="inferred from homology"/>
<sequence length="426" mass="46056">MYVLKNGQVLNASGELENKDVLIQNGKVNLIADSIEVTSGEEFDATGKLIAPGFIDVHVHLREPGGEHKETILTGTQAAARGGYTTICSMPNTKPVPDSKEVMENLQAKIKETAEVRVLPYASITTSLGTDELVDFEALKEAGAFAFTDDGVGVQLAGTMYEAMKRAAALDMAIVAHCEDNSLIYGGVVHDGIFAEKEGLKGIPNIAESVQIARDVLLAEAAGCHYHVCHISTKESVRVVRDAKRAGIRVTAEVSPHHLILDEEAIPGNDGNWKMNPPLRSKADRAALLEGLLDGTIDFIATDHAPHAAEEKNVPMEQAAFGIVGLETGFPLLYTHFVKTNEWTLKQLIDWMTVKPAECFKLPYGKLEEGSVADIVVLDLEKEATIDPATFYSKGKNTPFVGETCIGWPVATFAEGTLVYNEGEIK</sequence>
<reference key="1">
    <citation type="journal article" date="2011" name="J. Bacteriol.">
        <title>Genome sequence of lineage III Listeria monocytogenes strain HCC23.</title>
        <authorList>
            <person name="Steele C.L."/>
            <person name="Donaldson J.R."/>
            <person name="Paul D."/>
            <person name="Banes M.M."/>
            <person name="Arick T."/>
            <person name="Bridges S.M."/>
            <person name="Lawrence M.L."/>
        </authorList>
    </citation>
    <scope>NUCLEOTIDE SEQUENCE [LARGE SCALE GENOMIC DNA]</scope>
    <source>
        <strain>HCC23</strain>
    </source>
</reference>
<comment type="function">
    <text evidence="1">Catalyzes the reversible cyclization of carbamoyl aspartate to dihydroorotate.</text>
</comment>
<comment type="catalytic activity">
    <reaction evidence="1">
        <text>(S)-dihydroorotate + H2O = N-carbamoyl-L-aspartate + H(+)</text>
        <dbReference type="Rhea" id="RHEA:24296"/>
        <dbReference type="ChEBI" id="CHEBI:15377"/>
        <dbReference type="ChEBI" id="CHEBI:15378"/>
        <dbReference type="ChEBI" id="CHEBI:30864"/>
        <dbReference type="ChEBI" id="CHEBI:32814"/>
        <dbReference type="EC" id="3.5.2.3"/>
    </reaction>
</comment>
<comment type="cofactor">
    <cofactor evidence="1">
        <name>Zn(2+)</name>
        <dbReference type="ChEBI" id="CHEBI:29105"/>
    </cofactor>
    <text evidence="1">Binds 2 Zn(2+) ions per subunit.</text>
</comment>
<comment type="pathway">
    <text evidence="1">Pyrimidine metabolism; UMP biosynthesis via de novo pathway; (S)-dihydroorotate from bicarbonate: step 3/3.</text>
</comment>
<comment type="similarity">
    <text evidence="1">Belongs to the metallo-dependent hydrolases superfamily. DHOase family. Class I DHOase subfamily.</text>
</comment>